<proteinExistence type="evidence at protein level"/>
<name>CLAT_PIG</name>
<gene>
    <name type="primary">CHAT</name>
</gene>
<accession>P13222</accession>
<protein>
    <recommendedName>
        <fullName>Choline O-acetyltransferase</fullName>
        <shortName>CHOACTase</shortName>
        <shortName>ChAT</shortName>
        <shortName>Choline acetylase</shortName>
        <ecNumber>2.3.1.6</ecNumber>
    </recommendedName>
</protein>
<feature type="initiator methionine" description="Removed" evidence="4">
    <location>
        <position position="1"/>
    </location>
</feature>
<feature type="chain" id="PRO_0000210156" description="Choline O-acetyltransferase">
    <location>
        <begin position="2"/>
        <end position="641"/>
    </location>
</feature>
<feature type="region of interest" description="Disordered" evidence="3">
    <location>
        <begin position="1"/>
        <end position="29"/>
    </location>
</feature>
<feature type="region of interest" description="Disordered" evidence="3">
    <location>
        <begin position="619"/>
        <end position="641"/>
    </location>
</feature>
<feature type="active site" description="Proton acceptor" evidence="1">
    <location>
        <position position="335"/>
    </location>
</feature>
<feature type="binding site" evidence="1">
    <location>
        <begin position="413"/>
        <end position="425"/>
    </location>
    <ligand>
        <name>CoA</name>
        <dbReference type="ChEBI" id="CHEBI:57287"/>
    </ligand>
</feature>
<feature type="binding site" evidence="1">
    <location>
        <position position="451"/>
    </location>
    <ligand>
        <name>CoA</name>
        <dbReference type="ChEBI" id="CHEBI:57287"/>
    </ligand>
</feature>
<feature type="binding site" evidence="1">
    <location>
        <position position="552"/>
    </location>
    <ligand>
        <name>CoA</name>
        <dbReference type="ChEBI" id="CHEBI:57287"/>
    </ligand>
</feature>
<feature type="modified residue" description="Phosphoserine" evidence="2">
    <location>
        <position position="17"/>
    </location>
</feature>
<feature type="modified residue" description="Phosphoserine" evidence="2">
    <location>
        <position position="366"/>
    </location>
</feature>
<dbReference type="EC" id="2.3.1.6"/>
<dbReference type="EMBL" id="J03021">
    <property type="protein sequence ID" value="AAA31000.1"/>
    <property type="molecule type" value="mRNA"/>
</dbReference>
<dbReference type="EMBL" id="M27736">
    <property type="protein sequence ID" value="AAA31015.1"/>
    <property type="molecule type" value="mRNA"/>
</dbReference>
<dbReference type="PIR" id="A39961">
    <property type="entry name" value="A39961"/>
</dbReference>
<dbReference type="RefSeq" id="NP_001001541.1">
    <property type="nucleotide sequence ID" value="NM_001001541.1"/>
</dbReference>
<dbReference type="SMR" id="P13222"/>
<dbReference type="FunCoup" id="P13222">
    <property type="interactions" value="198"/>
</dbReference>
<dbReference type="STRING" id="9823.ENSSSCP00000011081"/>
<dbReference type="PaxDb" id="9823-ENSSSCP00000011081"/>
<dbReference type="PeptideAtlas" id="P13222"/>
<dbReference type="Ensembl" id="ENSSSCT00025104470.1">
    <property type="protein sequence ID" value="ENSSSCP00025046444.1"/>
    <property type="gene ID" value="ENSSSCG00025075663.1"/>
</dbReference>
<dbReference type="Ensembl" id="ENSSSCT00035003226.1">
    <property type="protein sequence ID" value="ENSSSCP00035001105.1"/>
    <property type="gene ID" value="ENSSSCG00035002581.1"/>
</dbReference>
<dbReference type="Ensembl" id="ENSSSCT00055026523.1">
    <property type="protein sequence ID" value="ENSSSCP00055021081.1"/>
    <property type="gene ID" value="ENSSSCG00055013438.1"/>
</dbReference>
<dbReference type="Ensembl" id="ENSSSCT00090029098">
    <property type="protein sequence ID" value="ENSSSCP00090018033"/>
    <property type="gene ID" value="ENSSSCG00090016493"/>
</dbReference>
<dbReference type="Ensembl" id="ENSSSCT00105055192">
    <property type="protein sequence ID" value="ENSSSCP00105038911"/>
    <property type="gene ID" value="ENSSSCG00105029002"/>
</dbReference>
<dbReference type="Ensembl" id="ENSSSCT00115028693">
    <property type="protein sequence ID" value="ENSSSCP00115027220"/>
    <property type="gene ID" value="ENSSSCG00115016378"/>
</dbReference>
<dbReference type="Ensembl" id="ENSSSCT00130019195">
    <property type="protein sequence ID" value="ENSSSCP00130013033"/>
    <property type="gene ID" value="ENSSSCG00130010217"/>
</dbReference>
<dbReference type="GeneID" id="396896"/>
<dbReference type="KEGG" id="ssc:396896"/>
<dbReference type="CTD" id="1103"/>
<dbReference type="eggNOG" id="KOG3717">
    <property type="taxonomic scope" value="Eukaryota"/>
</dbReference>
<dbReference type="HOGENOM" id="CLU_013513_3_0_1"/>
<dbReference type="InParanoid" id="P13222"/>
<dbReference type="OrthoDB" id="240216at2759"/>
<dbReference type="TreeFam" id="TF313836"/>
<dbReference type="Reactome" id="R-SSC-1483191">
    <property type="pathway name" value="Synthesis of PC"/>
</dbReference>
<dbReference type="Reactome" id="R-SSC-264642">
    <property type="pathway name" value="Acetylcholine Neurotransmitter Release Cycle"/>
</dbReference>
<dbReference type="Proteomes" id="UP000008227">
    <property type="component" value="Unplaced"/>
</dbReference>
<dbReference type="Proteomes" id="UP000314985">
    <property type="component" value="Unplaced"/>
</dbReference>
<dbReference type="Proteomes" id="UP000694570">
    <property type="component" value="Unplaced"/>
</dbReference>
<dbReference type="Proteomes" id="UP000694571">
    <property type="component" value="Unplaced"/>
</dbReference>
<dbReference type="Proteomes" id="UP000694720">
    <property type="component" value="Unplaced"/>
</dbReference>
<dbReference type="Proteomes" id="UP000694722">
    <property type="component" value="Unplaced"/>
</dbReference>
<dbReference type="Proteomes" id="UP000694723">
    <property type="component" value="Unplaced"/>
</dbReference>
<dbReference type="Proteomes" id="UP000694724">
    <property type="component" value="Unplaced"/>
</dbReference>
<dbReference type="Proteomes" id="UP000694725">
    <property type="component" value="Unplaced"/>
</dbReference>
<dbReference type="Proteomes" id="UP000694726">
    <property type="component" value="Unplaced"/>
</dbReference>
<dbReference type="Proteomes" id="UP000694727">
    <property type="component" value="Unplaced"/>
</dbReference>
<dbReference type="Proteomes" id="UP000694728">
    <property type="component" value="Unplaced"/>
</dbReference>
<dbReference type="GO" id="GO:0005737">
    <property type="term" value="C:cytoplasm"/>
    <property type="evidence" value="ECO:0000318"/>
    <property type="project" value="GO_Central"/>
</dbReference>
<dbReference type="GO" id="GO:0043005">
    <property type="term" value="C:neuron projection"/>
    <property type="evidence" value="ECO:0000318"/>
    <property type="project" value="GO_Central"/>
</dbReference>
<dbReference type="GO" id="GO:0045202">
    <property type="term" value="C:synapse"/>
    <property type="evidence" value="ECO:0007669"/>
    <property type="project" value="GOC"/>
</dbReference>
<dbReference type="GO" id="GO:0004102">
    <property type="term" value="F:choline O-acetyltransferase activity"/>
    <property type="evidence" value="ECO:0000318"/>
    <property type="project" value="GO_Central"/>
</dbReference>
<dbReference type="GO" id="GO:0008292">
    <property type="term" value="P:acetylcholine biosynthetic process"/>
    <property type="evidence" value="ECO:0000318"/>
    <property type="project" value="GO_Central"/>
</dbReference>
<dbReference type="GO" id="GO:0007274">
    <property type="term" value="P:neuromuscular synaptic transmission"/>
    <property type="evidence" value="ECO:0000318"/>
    <property type="project" value="GO_Central"/>
</dbReference>
<dbReference type="FunFam" id="3.30.559.10:FF:000001">
    <property type="entry name" value="Carnitine O-acetyltransferase"/>
    <property type="match status" value="1"/>
</dbReference>
<dbReference type="FunFam" id="3.30.559.70:FF:000004">
    <property type="entry name" value="Choline O-acetyltransferase"/>
    <property type="match status" value="1"/>
</dbReference>
<dbReference type="Gene3D" id="3.30.559.10">
    <property type="entry name" value="Chloramphenicol acetyltransferase-like domain"/>
    <property type="match status" value="1"/>
</dbReference>
<dbReference type="Gene3D" id="3.30.559.70">
    <property type="entry name" value="Choline/Carnitine o-acyltransferase, domain 2"/>
    <property type="match status" value="1"/>
</dbReference>
<dbReference type="InterPro" id="IPR000542">
    <property type="entry name" value="Carn_acyl_trans"/>
</dbReference>
<dbReference type="InterPro" id="IPR023213">
    <property type="entry name" value="CAT-like_dom_sf"/>
</dbReference>
<dbReference type="InterPro" id="IPR039551">
    <property type="entry name" value="Cho/carn_acyl_trans"/>
</dbReference>
<dbReference type="InterPro" id="IPR042231">
    <property type="entry name" value="Cho/carn_acyl_trans_2"/>
</dbReference>
<dbReference type="PANTHER" id="PTHR22589">
    <property type="entry name" value="CARNITINE O-ACYLTRANSFERASE"/>
    <property type="match status" value="1"/>
</dbReference>
<dbReference type="PANTHER" id="PTHR22589:SF14">
    <property type="entry name" value="CHOLINE O-ACETYLTRANSFERASE"/>
    <property type="match status" value="1"/>
</dbReference>
<dbReference type="Pfam" id="PF00755">
    <property type="entry name" value="Carn_acyltransf"/>
    <property type="match status" value="1"/>
</dbReference>
<dbReference type="SUPFAM" id="SSF52777">
    <property type="entry name" value="CoA-dependent acyltransferases"/>
    <property type="match status" value="2"/>
</dbReference>
<dbReference type="PROSITE" id="PS00439">
    <property type="entry name" value="ACYLTRANSF_C_1"/>
    <property type="match status" value="1"/>
</dbReference>
<dbReference type="PROSITE" id="PS00440">
    <property type="entry name" value="ACYLTRANSF_C_2"/>
    <property type="match status" value="1"/>
</dbReference>
<keyword id="KW-0012">Acyltransferase</keyword>
<keyword id="KW-0903">Direct protein sequencing</keyword>
<keyword id="KW-0530">Neurotransmitter biosynthesis</keyword>
<keyword id="KW-0597">Phosphoprotein</keyword>
<keyword id="KW-1185">Reference proteome</keyword>
<keyword id="KW-0808">Transferase</keyword>
<reference key="1">
    <citation type="journal article" date="1987" name="Proc. Natl. Acad. Sci. U.S.A.">
        <title>cDNA cloning and complete sequence of porcine choline acetyltransferase: in vitro translation of the corresponding RNA yields an active protein.</title>
        <authorList>
            <person name="Berrard S."/>
            <person name="Brice A."/>
            <person name="Lottspeich F."/>
            <person name="Braun A."/>
            <person name="Barde Y.-A."/>
            <person name="Mallet J."/>
        </authorList>
    </citation>
    <scope>NUCLEOTIDE SEQUENCE [MRNA]</scope>
    <source>
        <tissue>Ventral spinal cord</tissue>
    </source>
</reference>
<reference key="2">
    <citation type="journal article" date="1989" name="Brain Res. Bull.">
        <title>Molecular genetic approach to the study of mammalian choline acetyltransferase.</title>
        <authorList>
            <person name="Berrard S."/>
            <person name="Brice A."/>
            <person name="Mallet J."/>
        </authorList>
    </citation>
    <scope>NUCLEOTIDE SEQUENCE [MRNA]</scope>
    <source>
        <tissue>Ventral spinal cord</tissue>
    </source>
</reference>
<reference key="3">
    <citation type="journal article" date="1993" name="J. Neurochem.">
        <title>Comparison of the promoter region of the human and porcine choline acetyltransferase genes: localization of an important enhancer region.</title>
        <authorList>
            <person name="Hersh L.B."/>
            <person name="Kong C.F."/>
            <person name="Sampson C."/>
            <person name="Mues G."/>
            <person name="Li Y.P."/>
            <person name="Fisher A."/>
            <person name="Hilt D."/>
            <person name="Baetge E.E."/>
        </authorList>
    </citation>
    <scope>NUCLEOTIDE SEQUENCE [MRNA] OF 1-23</scope>
</reference>
<reference key="4">
    <citation type="journal article" date="1987" name="J. Neurochem.">
        <title>N-terminal sequence of pig brain choline acetyltransferase purified by a rapid procedure.</title>
        <authorList>
            <person name="Braun A."/>
            <person name="Barde Y.-A."/>
            <person name="Lottspeich F."/>
            <person name="Mewes H.-W."/>
            <person name="Thoenen H."/>
        </authorList>
    </citation>
    <scope>PROTEIN SEQUENCE OF 2-12</scope>
    <source>
        <tissue>Brain</tissue>
    </source>
</reference>
<sequence>MPILEKTPPKMAAKSPSSEEEPGLPKLPVPPLQQTLATYLRCMQHLVPEEQFRRSQAIVQQFGAPGGLGETLQQKLLERQEQTANWVSEYWLNDMYLNNRLALPVNSSPAVIFARQHFQDTNDQLRFAANLISGVLSYKALLDSHSIPIDCAKGQLSGQPLCMKQYYGLFSSYRLPGHTQDTLVAQKSSVMPEPEHVIVACCNQFFVLDVVINFRRLSEGDLFTQLRKIVRMASNEDERLPPIGLLTSDGRSEWAEARTVLVKDSTNRDSLDMIERCICLVCLDAPGGMELSDTNRALQLLHGGGCSKNGANRWYDKSLQFVVGRDGTCGVVCEHSPFDGIVLVQCTEHLLKHMVKSSKKMVRADSVSELPAPRRLRWKCSPEIQGLLASSAEKLQQIVKNLDFTVYKFDDYGKTFIKQQKCSPDAFIQVALQLAFYRLHGRLVPTYESASIRRFHEGRVDNIRSATPEALHFVKAITDHASAMPDSEKLLLLKDAIRAQTQYTVMAITGMAIDNHLLGLRELAREVCKELPEMFTDETYLMSNRFVLSTSQVPTTMEMFCCYGPVVPNGYGACYNPQPESILFCISSFHGCKETSSTKFAKAVEESFIEMKGLCSLSQSGMGKPLATKEKVTRPSQVHQP</sequence>
<organism>
    <name type="scientific">Sus scrofa</name>
    <name type="common">Pig</name>
    <dbReference type="NCBI Taxonomy" id="9823"/>
    <lineage>
        <taxon>Eukaryota</taxon>
        <taxon>Metazoa</taxon>
        <taxon>Chordata</taxon>
        <taxon>Craniata</taxon>
        <taxon>Vertebrata</taxon>
        <taxon>Euteleostomi</taxon>
        <taxon>Mammalia</taxon>
        <taxon>Eutheria</taxon>
        <taxon>Laurasiatheria</taxon>
        <taxon>Artiodactyla</taxon>
        <taxon>Suina</taxon>
        <taxon>Suidae</taxon>
        <taxon>Sus</taxon>
    </lineage>
</organism>
<comment type="function">
    <text>Catalyzes the reversible synthesis of acetylcholine (ACh) from acetyl CoA and choline at cholinergic synapses.</text>
</comment>
<comment type="catalytic activity">
    <reaction>
        <text>choline + acetyl-CoA = acetylcholine + CoA</text>
        <dbReference type="Rhea" id="RHEA:18821"/>
        <dbReference type="ChEBI" id="CHEBI:15354"/>
        <dbReference type="ChEBI" id="CHEBI:15355"/>
        <dbReference type="ChEBI" id="CHEBI:57287"/>
        <dbReference type="ChEBI" id="CHEBI:57288"/>
        <dbReference type="EC" id="2.3.1.6"/>
    </reaction>
</comment>
<comment type="similarity">
    <text evidence="5">Belongs to the carnitine/choline acetyltransferase family.</text>
</comment>
<evidence type="ECO:0000250" key="1"/>
<evidence type="ECO:0000250" key="2">
    <source>
        <dbReference type="UniProtKB" id="P32738"/>
    </source>
</evidence>
<evidence type="ECO:0000256" key="3">
    <source>
        <dbReference type="SAM" id="MobiDB-lite"/>
    </source>
</evidence>
<evidence type="ECO:0000269" key="4">
    <source>
    </source>
</evidence>
<evidence type="ECO:0000305" key="5"/>